<keyword id="KW-0030">Aminoacyl-tRNA synthetase</keyword>
<keyword id="KW-0067">ATP-binding</keyword>
<keyword id="KW-0963">Cytoplasm</keyword>
<keyword id="KW-0436">Ligase</keyword>
<keyword id="KW-0460">Magnesium</keyword>
<keyword id="KW-0479">Metal-binding</keyword>
<keyword id="KW-0547">Nucleotide-binding</keyword>
<keyword id="KW-0648">Protein biosynthesis</keyword>
<keyword id="KW-1185">Reference proteome</keyword>
<keyword id="KW-0694">RNA-binding</keyword>
<keyword id="KW-0820">tRNA-binding</keyword>
<gene>
    <name type="primary">pheT</name>
    <name type="ordered locus">BSU28630</name>
</gene>
<reference key="1">
    <citation type="journal article" date="1990" name="Biochimie">
        <title>Structure and nucleotide sequence of the Bacillus subtilis phenylalanyl-tRNA synthetase genes.</title>
        <authorList>
            <person name="Brakhage A."/>
            <person name="Wozny M."/>
            <person name="Putzer H."/>
        </authorList>
    </citation>
    <scope>NUCLEOTIDE SEQUENCE [GENOMIC DNA]</scope>
    <source>
        <strain>168</strain>
    </source>
</reference>
<reference key="2">
    <citation type="journal article" date="1991" name="Biochimie">
        <authorList>
            <person name="Brakhage A."/>
            <person name="Wozny M."/>
            <person name="Putzer H."/>
        </authorList>
    </citation>
    <scope>ERRATUM OF PUBMED:2127701</scope>
</reference>
<reference key="3">
    <citation type="journal article" date="1996" name="Microbiology">
        <title>The dnaB-pheA (256 degrees-240 degrees) region of the Bacillus subtilis chromosome containing genes responsible for stress responses, the utilization of plant cell walls and primary metabolism.</title>
        <authorList>
            <person name="Wipat A."/>
            <person name="Carter N."/>
            <person name="Brignell C.S."/>
            <person name="Guy J.B."/>
            <person name="Piper K."/>
            <person name="Sanders J."/>
            <person name="Emmerson P.T."/>
            <person name="Harwood C.R."/>
        </authorList>
    </citation>
    <scope>NUCLEOTIDE SEQUENCE [GENOMIC DNA]</scope>
    <source>
        <strain>168</strain>
    </source>
</reference>
<reference key="4">
    <citation type="journal article" date="1997" name="Nature">
        <title>The complete genome sequence of the Gram-positive bacterium Bacillus subtilis.</title>
        <authorList>
            <person name="Kunst F."/>
            <person name="Ogasawara N."/>
            <person name="Moszer I."/>
            <person name="Albertini A.M."/>
            <person name="Alloni G."/>
            <person name="Azevedo V."/>
            <person name="Bertero M.G."/>
            <person name="Bessieres P."/>
            <person name="Bolotin A."/>
            <person name="Borchert S."/>
            <person name="Borriss R."/>
            <person name="Boursier L."/>
            <person name="Brans A."/>
            <person name="Braun M."/>
            <person name="Brignell S.C."/>
            <person name="Bron S."/>
            <person name="Brouillet S."/>
            <person name="Bruschi C.V."/>
            <person name="Caldwell B."/>
            <person name="Capuano V."/>
            <person name="Carter N.M."/>
            <person name="Choi S.-K."/>
            <person name="Codani J.-J."/>
            <person name="Connerton I.F."/>
            <person name="Cummings N.J."/>
            <person name="Daniel R.A."/>
            <person name="Denizot F."/>
            <person name="Devine K.M."/>
            <person name="Duesterhoeft A."/>
            <person name="Ehrlich S.D."/>
            <person name="Emmerson P.T."/>
            <person name="Entian K.-D."/>
            <person name="Errington J."/>
            <person name="Fabret C."/>
            <person name="Ferrari E."/>
            <person name="Foulger D."/>
            <person name="Fritz C."/>
            <person name="Fujita M."/>
            <person name="Fujita Y."/>
            <person name="Fuma S."/>
            <person name="Galizzi A."/>
            <person name="Galleron N."/>
            <person name="Ghim S.-Y."/>
            <person name="Glaser P."/>
            <person name="Goffeau A."/>
            <person name="Golightly E.J."/>
            <person name="Grandi G."/>
            <person name="Guiseppi G."/>
            <person name="Guy B.J."/>
            <person name="Haga K."/>
            <person name="Haiech J."/>
            <person name="Harwood C.R."/>
            <person name="Henaut A."/>
            <person name="Hilbert H."/>
            <person name="Holsappel S."/>
            <person name="Hosono S."/>
            <person name="Hullo M.-F."/>
            <person name="Itaya M."/>
            <person name="Jones L.-M."/>
            <person name="Joris B."/>
            <person name="Karamata D."/>
            <person name="Kasahara Y."/>
            <person name="Klaerr-Blanchard M."/>
            <person name="Klein C."/>
            <person name="Kobayashi Y."/>
            <person name="Koetter P."/>
            <person name="Koningstein G."/>
            <person name="Krogh S."/>
            <person name="Kumano M."/>
            <person name="Kurita K."/>
            <person name="Lapidus A."/>
            <person name="Lardinois S."/>
            <person name="Lauber J."/>
            <person name="Lazarevic V."/>
            <person name="Lee S.-M."/>
            <person name="Levine A."/>
            <person name="Liu H."/>
            <person name="Masuda S."/>
            <person name="Mauel C."/>
            <person name="Medigue C."/>
            <person name="Medina N."/>
            <person name="Mellado R.P."/>
            <person name="Mizuno M."/>
            <person name="Moestl D."/>
            <person name="Nakai S."/>
            <person name="Noback M."/>
            <person name="Noone D."/>
            <person name="O'Reilly M."/>
            <person name="Ogawa K."/>
            <person name="Ogiwara A."/>
            <person name="Oudega B."/>
            <person name="Park S.-H."/>
            <person name="Parro V."/>
            <person name="Pohl T.M."/>
            <person name="Portetelle D."/>
            <person name="Porwollik S."/>
            <person name="Prescott A.M."/>
            <person name="Presecan E."/>
            <person name="Pujic P."/>
            <person name="Purnelle B."/>
            <person name="Rapoport G."/>
            <person name="Rey M."/>
            <person name="Reynolds S."/>
            <person name="Rieger M."/>
            <person name="Rivolta C."/>
            <person name="Rocha E."/>
            <person name="Roche B."/>
            <person name="Rose M."/>
            <person name="Sadaie Y."/>
            <person name="Sato T."/>
            <person name="Scanlan E."/>
            <person name="Schleich S."/>
            <person name="Schroeter R."/>
            <person name="Scoffone F."/>
            <person name="Sekiguchi J."/>
            <person name="Sekowska A."/>
            <person name="Seror S.J."/>
            <person name="Serror P."/>
            <person name="Shin B.-S."/>
            <person name="Soldo B."/>
            <person name="Sorokin A."/>
            <person name="Tacconi E."/>
            <person name="Takagi T."/>
            <person name="Takahashi H."/>
            <person name="Takemaru K."/>
            <person name="Takeuchi M."/>
            <person name="Tamakoshi A."/>
            <person name="Tanaka T."/>
            <person name="Terpstra P."/>
            <person name="Tognoni A."/>
            <person name="Tosato V."/>
            <person name="Uchiyama S."/>
            <person name="Vandenbol M."/>
            <person name="Vannier F."/>
            <person name="Vassarotti A."/>
            <person name="Viari A."/>
            <person name="Wambutt R."/>
            <person name="Wedler E."/>
            <person name="Wedler H."/>
            <person name="Weitzenegger T."/>
            <person name="Winters P."/>
            <person name="Wipat A."/>
            <person name="Yamamoto H."/>
            <person name="Yamane K."/>
            <person name="Yasumoto K."/>
            <person name="Yata K."/>
            <person name="Yoshida K."/>
            <person name="Yoshikawa H.-F."/>
            <person name="Zumstein E."/>
            <person name="Yoshikawa H."/>
            <person name="Danchin A."/>
        </authorList>
    </citation>
    <scope>NUCLEOTIDE SEQUENCE [LARGE SCALE GENOMIC DNA]</scope>
    <source>
        <strain>168</strain>
    </source>
</reference>
<proteinExistence type="inferred from homology"/>
<dbReference type="EC" id="6.1.1.20"/>
<dbReference type="EMBL" id="X53057">
    <property type="protein sequence ID" value="CAA37225.1"/>
    <property type="molecule type" value="Genomic_DNA"/>
</dbReference>
<dbReference type="EMBL" id="Z75208">
    <property type="protein sequence ID" value="CAA99564.1"/>
    <property type="molecule type" value="Genomic_DNA"/>
</dbReference>
<dbReference type="EMBL" id="AL009126">
    <property type="protein sequence ID" value="CAB14823.1"/>
    <property type="molecule type" value="Genomic_DNA"/>
</dbReference>
<dbReference type="PIR" id="A69676">
    <property type="entry name" value="YFBSB"/>
</dbReference>
<dbReference type="RefSeq" id="NP_390741.1">
    <property type="nucleotide sequence ID" value="NC_000964.3"/>
</dbReference>
<dbReference type="RefSeq" id="WP_004398979.1">
    <property type="nucleotide sequence ID" value="NZ_OZ025638.1"/>
</dbReference>
<dbReference type="SMR" id="P17922"/>
<dbReference type="FunCoup" id="P17922">
    <property type="interactions" value="591"/>
</dbReference>
<dbReference type="IntAct" id="P17922">
    <property type="interactions" value="1"/>
</dbReference>
<dbReference type="MINT" id="P17922"/>
<dbReference type="STRING" id="224308.BSU28630"/>
<dbReference type="jPOST" id="P17922"/>
<dbReference type="PaxDb" id="224308-BSU28630"/>
<dbReference type="EnsemblBacteria" id="CAB14823">
    <property type="protein sequence ID" value="CAB14823"/>
    <property type="gene ID" value="BSU_28630"/>
</dbReference>
<dbReference type="GeneID" id="937445"/>
<dbReference type="KEGG" id="bsu:BSU28630"/>
<dbReference type="PATRIC" id="fig|224308.179.peg.3110"/>
<dbReference type="eggNOG" id="COG0072">
    <property type="taxonomic scope" value="Bacteria"/>
</dbReference>
<dbReference type="eggNOG" id="COG0073">
    <property type="taxonomic scope" value="Bacteria"/>
</dbReference>
<dbReference type="InParanoid" id="P17922"/>
<dbReference type="OrthoDB" id="9805455at2"/>
<dbReference type="PhylomeDB" id="P17922"/>
<dbReference type="BioCyc" id="BSUB:BSU28630-MONOMER"/>
<dbReference type="SABIO-RK" id="P17922"/>
<dbReference type="Proteomes" id="UP000001570">
    <property type="component" value="Chromosome"/>
</dbReference>
<dbReference type="GO" id="GO:0009328">
    <property type="term" value="C:phenylalanine-tRNA ligase complex"/>
    <property type="evidence" value="ECO:0000318"/>
    <property type="project" value="GO_Central"/>
</dbReference>
<dbReference type="GO" id="GO:0005524">
    <property type="term" value="F:ATP binding"/>
    <property type="evidence" value="ECO:0007669"/>
    <property type="project" value="UniProtKB-UniRule"/>
</dbReference>
<dbReference type="GO" id="GO:0140096">
    <property type="term" value="F:catalytic activity, acting on a protein"/>
    <property type="evidence" value="ECO:0007669"/>
    <property type="project" value="UniProtKB-ARBA"/>
</dbReference>
<dbReference type="GO" id="GO:0000287">
    <property type="term" value="F:magnesium ion binding"/>
    <property type="evidence" value="ECO:0007669"/>
    <property type="project" value="UniProtKB-UniRule"/>
</dbReference>
<dbReference type="GO" id="GO:0004826">
    <property type="term" value="F:phenylalanine-tRNA ligase activity"/>
    <property type="evidence" value="ECO:0007669"/>
    <property type="project" value="UniProtKB-UniRule"/>
</dbReference>
<dbReference type="GO" id="GO:0016740">
    <property type="term" value="F:transferase activity"/>
    <property type="evidence" value="ECO:0007669"/>
    <property type="project" value="UniProtKB-ARBA"/>
</dbReference>
<dbReference type="GO" id="GO:0000049">
    <property type="term" value="F:tRNA binding"/>
    <property type="evidence" value="ECO:0007669"/>
    <property type="project" value="UniProtKB-KW"/>
</dbReference>
<dbReference type="GO" id="GO:0006432">
    <property type="term" value="P:phenylalanyl-tRNA aminoacylation"/>
    <property type="evidence" value="ECO:0000318"/>
    <property type="project" value="GO_Central"/>
</dbReference>
<dbReference type="CDD" id="cd00769">
    <property type="entry name" value="PheRS_beta_core"/>
    <property type="match status" value="1"/>
</dbReference>
<dbReference type="CDD" id="cd02796">
    <property type="entry name" value="tRNA_bind_bactPheRS"/>
    <property type="match status" value="1"/>
</dbReference>
<dbReference type="FunFam" id="2.40.50.140:FF:000045">
    <property type="entry name" value="Phenylalanine--tRNA ligase beta subunit"/>
    <property type="match status" value="1"/>
</dbReference>
<dbReference type="FunFam" id="3.30.56.10:FF:000002">
    <property type="entry name" value="Phenylalanine--tRNA ligase beta subunit"/>
    <property type="match status" value="1"/>
</dbReference>
<dbReference type="FunFam" id="3.30.70.380:FF:000001">
    <property type="entry name" value="Phenylalanine--tRNA ligase beta subunit"/>
    <property type="match status" value="1"/>
</dbReference>
<dbReference type="FunFam" id="3.30.930.10:FF:000022">
    <property type="entry name" value="Phenylalanine--tRNA ligase beta subunit"/>
    <property type="match status" value="1"/>
</dbReference>
<dbReference type="FunFam" id="3.50.40.10:FF:000001">
    <property type="entry name" value="Phenylalanine--tRNA ligase beta subunit"/>
    <property type="match status" value="1"/>
</dbReference>
<dbReference type="Gene3D" id="3.30.56.10">
    <property type="match status" value="2"/>
</dbReference>
<dbReference type="Gene3D" id="3.30.930.10">
    <property type="entry name" value="Bira Bifunctional Protein, Domain 2"/>
    <property type="match status" value="1"/>
</dbReference>
<dbReference type="Gene3D" id="3.30.70.380">
    <property type="entry name" value="Ferrodoxin-fold anticodon-binding domain"/>
    <property type="match status" value="1"/>
</dbReference>
<dbReference type="Gene3D" id="2.40.50.140">
    <property type="entry name" value="Nucleic acid-binding proteins"/>
    <property type="match status" value="1"/>
</dbReference>
<dbReference type="Gene3D" id="3.50.40.10">
    <property type="entry name" value="Phenylalanyl-trna Synthetase, Chain B, domain 3"/>
    <property type="match status" value="1"/>
</dbReference>
<dbReference type="HAMAP" id="MF_00283">
    <property type="entry name" value="Phe_tRNA_synth_beta1"/>
    <property type="match status" value="1"/>
</dbReference>
<dbReference type="InterPro" id="IPR045864">
    <property type="entry name" value="aa-tRNA-synth_II/BPL/LPL"/>
</dbReference>
<dbReference type="InterPro" id="IPR005146">
    <property type="entry name" value="B3/B4_tRNA-bd"/>
</dbReference>
<dbReference type="InterPro" id="IPR009061">
    <property type="entry name" value="DNA-bd_dom_put_sf"/>
</dbReference>
<dbReference type="InterPro" id="IPR005121">
    <property type="entry name" value="Fdx_antiC-bd"/>
</dbReference>
<dbReference type="InterPro" id="IPR036690">
    <property type="entry name" value="Fdx_antiC-bd_sf"/>
</dbReference>
<dbReference type="InterPro" id="IPR012340">
    <property type="entry name" value="NA-bd_OB-fold"/>
</dbReference>
<dbReference type="InterPro" id="IPR045060">
    <property type="entry name" value="Phe-tRNA-ligase_IIc_bsu"/>
</dbReference>
<dbReference type="InterPro" id="IPR004532">
    <property type="entry name" value="Phe-tRNA-ligase_IIc_bsu_bact"/>
</dbReference>
<dbReference type="InterPro" id="IPR020825">
    <property type="entry name" value="Phe-tRNA_synthase-like_B3/B4"/>
</dbReference>
<dbReference type="InterPro" id="IPR041616">
    <property type="entry name" value="PheRS_beta_core"/>
</dbReference>
<dbReference type="InterPro" id="IPR002547">
    <property type="entry name" value="tRNA-bd_dom"/>
</dbReference>
<dbReference type="InterPro" id="IPR033714">
    <property type="entry name" value="tRNA_bind_bactPheRS"/>
</dbReference>
<dbReference type="InterPro" id="IPR005147">
    <property type="entry name" value="tRNA_synthase_B5-dom"/>
</dbReference>
<dbReference type="NCBIfam" id="TIGR00472">
    <property type="entry name" value="pheT_bact"/>
    <property type="match status" value="1"/>
</dbReference>
<dbReference type="NCBIfam" id="NF045760">
    <property type="entry name" value="YtpR"/>
    <property type="match status" value="1"/>
</dbReference>
<dbReference type="PANTHER" id="PTHR10947:SF0">
    <property type="entry name" value="PHENYLALANINE--TRNA LIGASE BETA SUBUNIT"/>
    <property type="match status" value="1"/>
</dbReference>
<dbReference type="PANTHER" id="PTHR10947">
    <property type="entry name" value="PHENYLALANYL-TRNA SYNTHETASE BETA CHAIN AND LEUCINE-RICH REPEAT-CONTAINING PROTEIN 47"/>
    <property type="match status" value="1"/>
</dbReference>
<dbReference type="Pfam" id="PF03483">
    <property type="entry name" value="B3_4"/>
    <property type="match status" value="1"/>
</dbReference>
<dbReference type="Pfam" id="PF03484">
    <property type="entry name" value="B5"/>
    <property type="match status" value="1"/>
</dbReference>
<dbReference type="Pfam" id="PF03147">
    <property type="entry name" value="FDX-ACB"/>
    <property type="match status" value="1"/>
</dbReference>
<dbReference type="Pfam" id="PF01588">
    <property type="entry name" value="tRNA_bind"/>
    <property type="match status" value="1"/>
</dbReference>
<dbReference type="Pfam" id="PF17759">
    <property type="entry name" value="tRNA_synthFbeta"/>
    <property type="match status" value="1"/>
</dbReference>
<dbReference type="SMART" id="SM00873">
    <property type="entry name" value="B3_4"/>
    <property type="match status" value="1"/>
</dbReference>
<dbReference type="SMART" id="SM00874">
    <property type="entry name" value="B5"/>
    <property type="match status" value="1"/>
</dbReference>
<dbReference type="SMART" id="SM00896">
    <property type="entry name" value="FDX-ACB"/>
    <property type="match status" value="1"/>
</dbReference>
<dbReference type="SUPFAM" id="SSF54991">
    <property type="entry name" value="Anticodon-binding domain of PheRS"/>
    <property type="match status" value="1"/>
</dbReference>
<dbReference type="SUPFAM" id="SSF55681">
    <property type="entry name" value="Class II aaRS and biotin synthetases"/>
    <property type="match status" value="1"/>
</dbReference>
<dbReference type="SUPFAM" id="SSF50249">
    <property type="entry name" value="Nucleic acid-binding proteins"/>
    <property type="match status" value="1"/>
</dbReference>
<dbReference type="SUPFAM" id="SSF56037">
    <property type="entry name" value="PheT/TilS domain"/>
    <property type="match status" value="1"/>
</dbReference>
<dbReference type="SUPFAM" id="SSF46955">
    <property type="entry name" value="Putative DNA-binding domain"/>
    <property type="match status" value="1"/>
</dbReference>
<dbReference type="PROSITE" id="PS51483">
    <property type="entry name" value="B5"/>
    <property type="match status" value="1"/>
</dbReference>
<dbReference type="PROSITE" id="PS51447">
    <property type="entry name" value="FDX_ACB"/>
    <property type="match status" value="1"/>
</dbReference>
<dbReference type="PROSITE" id="PS50886">
    <property type="entry name" value="TRBD"/>
    <property type="match status" value="1"/>
</dbReference>
<accession>P17922</accession>
<accession>P94540</accession>
<organism>
    <name type="scientific">Bacillus subtilis (strain 168)</name>
    <dbReference type="NCBI Taxonomy" id="224308"/>
    <lineage>
        <taxon>Bacteria</taxon>
        <taxon>Bacillati</taxon>
        <taxon>Bacillota</taxon>
        <taxon>Bacilli</taxon>
        <taxon>Bacillales</taxon>
        <taxon>Bacillaceae</taxon>
        <taxon>Bacillus</taxon>
    </lineage>
</organism>
<comment type="catalytic activity">
    <reaction>
        <text>tRNA(Phe) + L-phenylalanine + ATP = L-phenylalanyl-tRNA(Phe) + AMP + diphosphate + H(+)</text>
        <dbReference type="Rhea" id="RHEA:19413"/>
        <dbReference type="Rhea" id="RHEA-COMP:9668"/>
        <dbReference type="Rhea" id="RHEA-COMP:9699"/>
        <dbReference type="ChEBI" id="CHEBI:15378"/>
        <dbReference type="ChEBI" id="CHEBI:30616"/>
        <dbReference type="ChEBI" id="CHEBI:33019"/>
        <dbReference type="ChEBI" id="CHEBI:58095"/>
        <dbReference type="ChEBI" id="CHEBI:78442"/>
        <dbReference type="ChEBI" id="CHEBI:78531"/>
        <dbReference type="ChEBI" id="CHEBI:456215"/>
        <dbReference type="EC" id="6.1.1.20"/>
    </reaction>
</comment>
<comment type="cofactor">
    <cofactor evidence="1">
        <name>Mg(2+)</name>
        <dbReference type="ChEBI" id="CHEBI:18420"/>
    </cofactor>
    <text evidence="1">Binds 2 magnesium ions per tetramer.</text>
</comment>
<comment type="subunit">
    <text evidence="1">Tetramer of two alpha and two beta subunits.</text>
</comment>
<comment type="subcellular location">
    <subcellularLocation>
        <location>Cytoplasm</location>
    </subcellularLocation>
</comment>
<comment type="similarity">
    <text evidence="2">Belongs to the phenylalanyl-tRNA synthetase beta subunit family. Type 1 subfamily.</text>
</comment>
<evidence type="ECO:0000250" key="1"/>
<evidence type="ECO:0000305" key="2"/>
<name>SYFB_BACSU</name>
<sequence>MFVSYKWLEDYVDLKGMDPAVLAEKITRAGIEVEGIEYKGEGIKGVVIGHVLEREQHPNADKLNKCLVDIGAEAPVQIICGAPNVDKGQKVAVATVGAVLPGNFKIKKAKLRGEESNGMICSLQELGIESKLVAKEYAEGIFVFPNDAETGSDALAALQLDDAILELGLTPNRADAMNMLGVAYEVAAILDTEVKLPQTDYPAASEQASDYISVKIEDQEANPLYTAKIIKNVTIAPSPLWMQTKLMNAGIRPHNNVVDITNFVLLEYGQPLHAFDYDRFGSKEVVVRKAAENEMIVTLDDQERKLSADHLVITNGTKAQAVAGVMGGAESEVQEDTKTILLEAAYFNGQKVRKASKDLGLRSESSVRFEKGIDPARVRLAAERAAQLIHLYAGGEVLAGTVEEDHLTIEANNIHVSADKVSSVLGLTISKEELISIYKRLGFTVGEADDLLVVTVPSRRGDITIEEDLIEEAARLYGYDNIPSTLPETAGTTGGLTPYQAKRRKVRRFLEGAGLSQAITYSLTNEKKATAFAIEKSLNTVLALPMSEERSILRHSLVPNLLDSVSYNLARQTDSVALYEVGSVFLTKEEDTKPVETERVAGAVTGLWRKQLWQGEKKPVDFFVVKGIVEGLLDKLNVLDSIEFVQSERKQLHPGRTANILLNGSLIGFIGQVHPSLEKELDIKETYVFELDLHALLAAETAPLVYTAIPKYPSVTRDIALVTDKTVTSGQLESVIKEAGGKLLKEVTVFDVYEGEHMEEGKKSVAFSLQYVNPEQTLTEEEVTKAHSKVLKALEDTYQAVLRG</sequence>
<feature type="chain" id="PRO_0000126844" description="Phenylalanine--tRNA ligase beta subunit">
    <location>
        <begin position="1"/>
        <end position="804"/>
    </location>
</feature>
<feature type="domain" description="tRNA-binding">
    <location>
        <begin position="40"/>
        <end position="155"/>
    </location>
</feature>
<feature type="domain" description="B5">
    <location>
        <begin position="409"/>
        <end position="484"/>
    </location>
</feature>
<feature type="domain" description="FDX-ACB">
    <location>
        <begin position="710"/>
        <end position="803"/>
    </location>
</feature>
<feature type="binding site" evidence="1">
    <location>
        <position position="462"/>
    </location>
    <ligand>
        <name>Mg(2+)</name>
        <dbReference type="ChEBI" id="CHEBI:18420"/>
        <note>shared with alpha subunit</note>
    </ligand>
</feature>
<feature type="binding site" evidence="1">
    <location>
        <position position="468"/>
    </location>
    <ligand>
        <name>Mg(2+)</name>
        <dbReference type="ChEBI" id="CHEBI:18420"/>
        <note>shared with alpha subunit</note>
    </ligand>
</feature>
<feature type="binding site" evidence="1">
    <location>
        <position position="471"/>
    </location>
    <ligand>
        <name>Mg(2+)</name>
        <dbReference type="ChEBI" id="CHEBI:18420"/>
        <note>shared with alpha subunit</note>
    </ligand>
</feature>
<feature type="binding site" evidence="1">
    <location>
        <position position="472"/>
    </location>
    <ligand>
        <name>Mg(2+)</name>
        <dbReference type="ChEBI" id="CHEBI:18420"/>
        <note>shared with alpha subunit</note>
    </ligand>
</feature>
<feature type="sequence conflict" description="In Ref. 1; CAA37225." evidence="2" ref="1">
    <original>KL</original>
    <variation>NV</variation>
    <location>
        <begin position="110"/>
        <end position="111"/>
    </location>
</feature>
<protein>
    <recommendedName>
        <fullName>Phenylalanine--tRNA ligase beta subunit</fullName>
        <ecNumber>6.1.1.20</ecNumber>
    </recommendedName>
    <alternativeName>
        <fullName>Phenylalanyl-tRNA synthetase beta subunit</fullName>
        <shortName>PheRS</shortName>
    </alternativeName>
</protein>